<dbReference type="EC" id="3.1.3.64" evidence="1"/>
<dbReference type="EMBL" id="AE014296">
    <property type="protein sequence ID" value="AAF47460.1"/>
    <property type="molecule type" value="Genomic_DNA"/>
</dbReference>
<dbReference type="EMBL" id="AY047571">
    <property type="protein sequence ID" value="AAK77303.1"/>
    <property type="molecule type" value="mRNA"/>
</dbReference>
<dbReference type="RefSeq" id="NP_001189016.1">
    <property type="nucleotide sequence ID" value="NM_001202087.1"/>
</dbReference>
<dbReference type="RefSeq" id="NP_612087.1">
    <property type="nucleotide sequence ID" value="NM_138243.4"/>
</dbReference>
<dbReference type="SMR" id="Q9W0I6"/>
<dbReference type="BioGRID" id="63683">
    <property type="interactions" value="5"/>
</dbReference>
<dbReference type="FunCoup" id="Q9W0I6">
    <property type="interactions" value="2835"/>
</dbReference>
<dbReference type="IntAct" id="Q9W0I6">
    <property type="interactions" value="32"/>
</dbReference>
<dbReference type="STRING" id="7227.FBpp0072546"/>
<dbReference type="PaxDb" id="7227-FBpp0292309"/>
<dbReference type="DNASU" id="38137"/>
<dbReference type="EnsemblMetazoa" id="FBtr0072652">
    <property type="protein sequence ID" value="FBpp0072546"/>
    <property type="gene ID" value="FBgn0283500"/>
</dbReference>
<dbReference type="EnsemblMetazoa" id="FBtr0303217">
    <property type="protein sequence ID" value="FBpp0292309"/>
    <property type="gene ID" value="FBgn0283500"/>
</dbReference>
<dbReference type="GeneID" id="38137"/>
<dbReference type="KEGG" id="dme:Dmel_CG9128"/>
<dbReference type="UCSC" id="CG9128-RA">
    <property type="organism name" value="d. melanogaster"/>
</dbReference>
<dbReference type="AGR" id="FB:FBgn0283500"/>
<dbReference type="CTD" id="38137"/>
<dbReference type="FlyBase" id="FBgn0283500">
    <property type="gene designation" value="Sac1"/>
</dbReference>
<dbReference type="VEuPathDB" id="VectorBase:FBgn0283500"/>
<dbReference type="eggNOG" id="KOG1889">
    <property type="taxonomic scope" value="Eukaryota"/>
</dbReference>
<dbReference type="GeneTree" id="ENSGT00940000155579"/>
<dbReference type="HOGENOM" id="CLU_003016_7_4_1"/>
<dbReference type="InParanoid" id="Q9W0I6"/>
<dbReference type="OMA" id="ITKAQPV"/>
<dbReference type="OrthoDB" id="405996at2759"/>
<dbReference type="PhylomeDB" id="Q9W0I6"/>
<dbReference type="Reactome" id="R-DME-1483248">
    <property type="pathway name" value="Synthesis of PIPs at the ER membrane"/>
</dbReference>
<dbReference type="Reactome" id="R-DME-1660514">
    <property type="pathway name" value="Synthesis of PIPs at the Golgi membrane"/>
</dbReference>
<dbReference type="BioGRID-ORCS" id="38137">
    <property type="hits" value="0 hits in 3 CRISPR screens"/>
</dbReference>
<dbReference type="GenomeRNAi" id="38137"/>
<dbReference type="PRO" id="PR:Q9W0I6"/>
<dbReference type="Proteomes" id="UP000000803">
    <property type="component" value="Chromosome 3L"/>
</dbReference>
<dbReference type="Bgee" id="FBgn0283500">
    <property type="expression patterns" value="Expressed in embryonic/larval hemocyte (Drosophila) and 144 other cell types or tissues"/>
</dbReference>
<dbReference type="ExpressionAtlas" id="Q9W0I6">
    <property type="expression patterns" value="baseline and differential"/>
</dbReference>
<dbReference type="GO" id="GO:0030424">
    <property type="term" value="C:axon"/>
    <property type="evidence" value="ECO:0000314"/>
    <property type="project" value="FlyBase"/>
</dbReference>
<dbReference type="GO" id="GO:0012505">
    <property type="term" value="C:endomembrane system"/>
    <property type="evidence" value="ECO:0007005"/>
    <property type="project" value="FlyBase"/>
</dbReference>
<dbReference type="GO" id="GO:0005783">
    <property type="term" value="C:endoplasmic reticulum"/>
    <property type="evidence" value="ECO:0000318"/>
    <property type="project" value="GO_Central"/>
</dbReference>
<dbReference type="GO" id="GO:0005789">
    <property type="term" value="C:endoplasmic reticulum membrane"/>
    <property type="evidence" value="ECO:0000250"/>
    <property type="project" value="UniProtKB"/>
</dbReference>
<dbReference type="GO" id="GO:0000139">
    <property type="term" value="C:Golgi membrane"/>
    <property type="evidence" value="ECO:0007669"/>
    <property type="project" value="UniProtKB-SubCell"/>
</dbReference>
<dbReference type="GO" id="GO:0043025">
    <property type="term" value="C:neuronal cell body"/>
    <property type="evidence" value="ECO:0000314"/>
    <property type="project" value="FlyBase"/>
</dbReference>
<dbReference type="GO" id="GO:0071683">
    <property type="term" value="C:sensory dendrite"/>
    <property type="evidence" value="ECO:0000314"/>
    <property type="project" value="FlyBase"/>
</dbReference>
<dbReference type="GO" id="GO:0016791">
    <property type="term" value="F:phosphatase activity"/>
    <property type="evidence" value="ECO:0000250"/>
    <property type="project" value="UniProtKB"/>
</dbReference>
<dbReference type="GO" id="GO:0052866">
    <property type="term" value="F:phosphatidylinositol phosphate phosphatase activity"/>
    <property type="evidence" value="ECO:0000314"/>
    <property type="project" value="FlyBase"/>
</dbReference>
<dbReference type="GO" id="GO:0004438">
    <property type="term" value="F:phosphatidylinositol-3-phosphate phosphatase activity"/>
    <property type="evidence" value="ECO:0007669"/>
    <property type="project" value="UniProtKB-EC"/>
</dbReference>
<dbReference type="GO" id="GO:0043812">
    <property type="term" value="F:phosphatidylinositol-4-phosphate phosphatase activity"/>
    <property type="evidence" value="ECO:0000315"/>
    <property type="project" value="FlyBase"/>
</dbReference>
<dbReference type="GO" id="GO:0008088">
    <property type="term" value="P:axo-dendritic transport"/>
    <property type="evidence" value="ECO:0000315"/>
    <property type="project" value="FlyBase"/>
</dbReference>
<dbReference type="GO" id="GO:0016199">
    <property type="term" value="P:axon midline choice point recognition"/>
    <property type="evidence" value="ECO:0000315"/>
    <property type="project" value="FlyBase"/>
</dbReference>
<dbReference type="GO" id="GO:0031122">
    <property type="term" value="P:cytoplasmic microtubule organization"/>
    <property type="evidence" value="ECO:0000315"/>
    <property type="project" value="FlyBase"/>
</dbReference>
<dbReference type="GO" id="GO:0046664">
    <property type="term" value="P:dorsal closure, amnioserosa morphology change"/>
    <property type="evidence" value="ECO:0000315"/>
    <property type="project" value="FlyBase"/>
</dbReference>
<dbReference type="GO" id="GO:0035149">
    <property type="term" value="P:lumen formation, open tracheal system"/>
    <property type="evidence" value="ECO:0007001"/>
    <property type="project" value="FlyBase"/>
</dbReference>
<dbReference type="GO" id="GO:0046329">
    <property type="term" value="P:negative regulation of JNK cascade"/>
    <property type="evidence" value="ECO:0000315"/>
    <property type="project" value="FlyBase"/>
</dbReference>
<dbReference type="GO" id="GO:0045879">
    <property type="term" value="P:negative regulation of smoothened signaling pathway"/>
    <property type="evidence" value="ECO:0000315"/>
    <property type="project" value="FlyBase"/>
</dbReference>
<dbReference type="GO" id="GO:0046856">
    <property type="term" value="P:phosphatidylinositol dephosphorylation"/>
    <property type="evidence" value="ECO:0000315"/>
    <property type="project" value="FlyBase"/>
</dbReference>
<dbReference type="GO" id="GO:0046488">
    <property type="term" value="P:phosphatidylinositol metabolic process"/>
    <property type="evidence" value="ECO:0000315"/>
    <property type="project" value="FlyBase"/>
</dbReference>
<dbReference type="GO" id="GO:0060074">
    <property type="term" value="P:synapse maturation"/>
    <property type="evidence" value="ECO:0000315"/>
    <property type="project" value="FlyBase"/>
</dbReference>
<dbReference type="InterPro" id="IPR002013">
    <property type="entry name" value="SAC_dom"/>
</dbReference>
<dbReference type="PANTHER" id="PTHR45662">
    <property type="entry name" value="PHOSPHATIDYLINOSITIDE PHOSPHATASE SAC1"/>
    <property type="match status" value="1"/>
</dbReference>
<dbReference type="PANTHER" id="PTHR45662:SF2">
    <property type="entry name" value="PHOSPHATIDYLINOSITOL-3-PHOSPHATASE SAC1"/>
    <property type="match status" value="1"/>
</dbReference>
<dbReference type="Pfam" id="PF02383">
    <property type="entry name" value="Syja_N"/>
    <property type="match status" value="1"/>
</dbReference>
<dbReference type="PROSITE" id="PS50275">
    <property type="entry name" value="SAC"/>
    <property type="match status" value="1"/>
</dbReference>
<organism>
    <name type="scientific">Drosophila melanogaster</name>
    <name type="common">Fruit fly</name>
    <dbReference type="NCBI Taxonomy" id="7227"/>
    <lineage>
        <taxon>Eukaryota</taxon>
        <taxon>Metazoa</taxon>
        <taxon>Ecdysozoa</taxon>
        <taxon>Arthropoda</taxon>
        <taxon>Hexapoda</taxon>
        <taxon>Insecta</taxon>
        <taxon>Pterygota</taxon>
        <taxon>Neoptera</taxon>
        <taxon>Endopterygota</taxon>
        <taxon>Diptera</taxon>
        <taxon>Brachycera</taxon>
        <taxon>Muscomorpha</taxon>
        <taxon>Ephydroidea</taxon>
        <taxon>Drosophilidae</taxon>
        <taxon>Drosophila</taxon>
        <taxon>Sophophora</taxon>
    </lineage>
</organism>
<keyword id="KW-0256">Endoplasmic reticulum</keyword>
<keyword id="KW-0333">Golgi apparatus</keyword>
<keyword id="KW-0378">Hydrolase</keyword>
<keyword id="KW-0472">Membrane</keyword>
<keyword id="KW-1185">Reference proteome</keyword>
<keyword id="KW-0812">Transmembrane</keyword>
<keyword id="KW-1133">Transmembrane helix</keyword>
<proteinExistence type="evidence at transcript level"/>
<protein>
    <recommendedName>
        <fullName>Phosphatidylinositol-3-phosphatase SAC1</fullName>
        <ecNumber evidence="1">3.1.3.64</ecNumber>
    </recommendedName>
    <alternativeName>
        <fullName evidence="1">Phosphatidylinositol-4-phosphate phosphatase</fullName>
    </alternativeName>
    <alternativeName>
        <fullName>Suppressor of actin mutations 1-like protein</fullName>
    </alternativeName>
</protein>
<accession>Q9W0I6</accession>
<name>SAC1_DROME</name>
<comment type="function">
    <text evidence="1">Phosphoinositide phosphatase which catalyzes the hydrolysis of phosphatidylinositol 3-phosphate (PtdIns(3)P) and phosphatidylinositol 4-phosphate (PtdIns(4)P) (By similarity). Has low activity towards phosphatidylinositol-3,5-bisphosphate (PtdIns(3,5)P2) (By similarity).</text>
</comment>
<comment type="catalytic activity">
    <reaction evidence="1">
        <text>a 1,2-diacyl-sn-glycero-3-phospho-(1D-myo-inositol-3-phosphate) + H2O = a 1,2-diacyl-sn-glycero-3-phospho-(1D-myo-inositol) + phosphate</text>
        <dbReference type="Rhea" id="RHEA:12316"/>
        <dbReference type="ChEBI" id="CHEBI:15377"/>
        <dbReference type="ChEBI" id="CHEBI:43474"/>
        <dbReference type="ChEBI" id="CHEBI:57880"/>
        <dbReference type="ChEBI" id="CHEBI:58088"/>
        <dbReference type="EC" id="3.1.3.64"/>
    </reaction>
    <physiologicalReaction direction="left-to-right" evidence="1">
        <dbReference type="Rhea" id="RHEA:12317"/>
    </physiologicalReaction>
</comment>
<comment type="catalytic activity">
    <reaction evidence="1">
        <text>a 1,2-diacyl-sn-glycero-3-phospho-(1D-myo-inositol 4-phosphate) + H2O = a 1,2-diacyl-sn-glycero-3-phospho-(1D-myo-inositol) + phosphate</text>
        <dbReference type="Rhea" id="RHEA:55652"/>
        <dbReference type="ChEBI" id="CHEBI:15377"/>
        <dbReference type="ChEBI" id="CHEBI:43474"/>
        <dbReference type="ChEBI" id="CHEBI:57880"/>
        <dbReference type="ChEBI" id="CHEBI:58178"/>
    </reaction>
    <physiologicalReaction direction="left-to-right" evidence="1">
        <dbReference type="Rhea" id="RHEA:55653"/>
    </physiologicalReaction>
</comment>
<comment type="subcellular location">
    <subcellularLocation>
        <location evidence="1">Endoplasmic reticulum membrane</location>
        <topology evidence="2">Multi-pass membrane protein</topology>
    </subcellularLocation>
    <subcellularLocation>
        <location evidence="1">Golgi apparatus membrane</location>
        <topology evidence="2">Multi-pass membrane protein</topology>
    </subcellularLocation>
</comment>
<reference key="1">
    <citation type="journal article" date="2000" name="Science">
        <title>The genome sequence of Drosophila melanogaster.</title>
        <authorList>
            <person name="Adams M.D."/>
            <person name="Celniker S.E."/>
            <person name="Holt R.A."/>
            <person name="Evans C.A."/>
            <person name="Gocayne J.D."/>
            <person name="Amanatides P.G."/>
            <person name="Scherer S.E."/>
            <person name="Li P.W."/>
            <person name="Hoskins R.A."/>
            <person name="Galle R.F."/>
            <person name="George R.A."/>
            <person name="Lewis S.E."/>
            <person name="Richards S."/>
            <person name="Ashburner M."/>
            <person name="Henderson S.N."/>
            <person name="Sutton G.G."/>
            <person name="Wortman J.R."/>
            <person name="Yandell M.D."/>
            <person name="Zhang Q."/>
            <person name="Chen L.X."/>
            <person name="Brandon R.C."/>
            <person name="Rogers Y.-H.C."/>
            <person name="Blazej R.G."/>
            <person name="Champe M."/>
            <person name="Pfeiffer B.D."/>
            <person name="Wan K.H."/>
            <person name="Doyle C."/>
            <person name="Baxter E.G."/>
            <person name="Helt G."/>
            <person name="Nelson C.R."/>
            <person name="Miklos G.L.G."/>
            <person name="Abril J.F."/>
            <person name="Agbayani A."/>
            <person name="An H.-J."/>
            <person name="Andrews-Pfannkoch C."/>
            <person name="Baldwin D."/>
            <person name="Ballew R.M."/>
            <person name="Basu A."/>
            <person name="Baxendale J."/>
            <person name="Bayraktaroglu L."/>
            <person name="Beasley E.M."/>
            <person name="Beeson K.Y."/>
            <person name="Benos P.V."/>
            <person name="Berman B.P."/>
            <person name="Bhandari D."/>
            <person name="Bolshakov S."/>
            <person name="Borkova D."/>
            <person name="Botchan M.R."/>
            <person name="Bouck J."/>
            <person name="Brokstein P."/>
            <person name="Brottier P."/>
            <person name="Burtis K.C."/>
            <person name="Busam D.A."/>
            <person name="Butler H."/>
            <person name="Cadieu E."/>
            <person name="Center A."/>
            <person name="Chandra I."/>
            <person name="Cherry J.M."/>
            <person name="Cawley S."/>
            <person name="Dahlke C."/>
            <person name="Davenport L.B."/>
            <person name="Davies P."/>
            <person name="de Pablos B."/>
            <person name="Delcher A."/>
            <person name="Deng Z."/>
            <person name="Mays A.D."/>
            <person name="Dew I."/>
            <person name="Dietz S.M."/>
            <person name="Dodson K."/>
            <person name="Doup L.E."/>
            <person name="Downes M."/>
            <person name="Dugan-Rocha S."/>
            <person name="Dunkov B.C."/>
            <person name="Dunn P."/>
            <person name="Durbin K.J."/>
            <person name="Evangelista C.C."/>
            <person name="Ferraz C."/>
            <person name="Ferriera S."/>
            <person name="Fleischmann W."/>
            <person name="Fosler C."/>
            <person name="Gabrielian A.E."/>
            <person name="Garg N.S."/>
            <person name="Gelbart W.M."/>
            <person name="Glasser K."/>
            <person name="Glodek A."/>
            <person name="Gong F."/>
            <person name="Gorrell J.H."/>
            <person name="Gu Z."/>
            <person name="Guan P."/>
            <person name="Harris M."/>
            <person name="Harris N.L."/>
            <person name="Harvey D.A."/>
            <person name="Heiman T.J."/>
            <person name="Hernandez J.R."/>
            <person name="Houck J."/>
            <person name="Hostin D."/>
            <person name="Houston K.A."/>
            <person name="Howland T.J."/>
            <person name="Wei M.-H."/>
            <person name="Ibegwam C."/>
            <person name="Jalali M."/>
            <person name="Kalush F."/>
            <person name="Karpen G.H."/>
            <person name="Ke Z."/>
            <person name="Kennison J.A."/>
            <person name="Ketchum K.A."/>
            <person name="Kimmel B.E."/>
            <person name="Kodira C.D."/>
            <person name="Kraft C.L."/>
            <person name="Kravitz S."/>
            <person name="Kulp D."/>
            <person name="Lai Z."/>
            <person name="Lasko P."/>
            <person name="Lei Y."/>
            <person name="Levitsky A.A."/>
            <person name="Li J.H."/>
            <person name="Li Z."/>
            <person name="Liang Y."/>
            <person name="Lin X."/>
            <person name="Liu X."/>
            <person name="Mattei B."/>
            <person name="McIntosh T.C."/>
            <person name="McLeod M.P."/>
            <person name="McPherson D."/>
            <person name="Merkulov G."/>
            <person name="Milshina N.V."/>
            <person name="Mobarry C."/>
            <person name="Morris J."/>
            <person name="Moshrefi A."/>
            <person name="Mount S.M."/>
            <person name="Moy M."/>
            <person name="Murphy B."/>
            <person name="Murphy L."/>
            <person name="Muzny D.M."/>
            <person name="Nelson D.L."/>
            <person name="Nelson D.R."/>
            <person name="Nelson K.A."/>
            <person name="Nixon K."/>
            <person name="Nusskern D.R."/>
            <person name="Pacleb J.M."/>
            <person name="Palazzolo M."/>
            <person name="Pittman G.S."/>
            <person name="Pan S."/>
            <person name="Pollard J."/>
            <person name="Puri V."/>
            <person name="Reese M.G."/>
            <person name="Reinert K."/>
            <person name="Remington K."/>
            <person name="Saunders R.D.C."/>
            <person name="Scheeler F."/>
            <person name="Shen H."/>
            <person name="Shue B.C."/>
            <person name="Siden-Kiamos I."/>
            <person name="Simpson M."/>
            <person name="Skupski M.P."/>
            <person name="Smith T.J."/>
            <person name="Spier E."/>
            <person name="Spradling A.C."/>
            <person name="Stapleton M."/>
            <person name="Strong R."/>
            <person name="Sun E."/>
            <person name="Svirskas R."/>
            <person name="Tector C."/>
            <person name="Turner R."/>
            <person name="Venter E."/>
            <person name="Wang A.H."/>
            <person name="Wang X."/>
            <person name="Wang Z.-Y."/>
            <person name="Wassarman D.A."/>
            <person name="Weinstock G.M."/>
            <person name="Weissenbach J."/>
            <person name="Williams S.M."/>
            <person name="Woodage T."/>
            <person name="Worley K.C."/>
            <person name="Wu D."/>
            <person name="Yang S."/>
            <person name="Yao Q.A."/>
            <person name="Ye J."/>
            <person name="Yeh R.-F."/>
            <person name="Zaveri J.S."/>
            <person name="Zhan M."/>
            <person name="Zhang G."/>
            <person name="Zhao Q."/>
            <person name="Zheng L."/>
            <person name="Zheng X.H."/>
            <person name="Zhong F.N."/>
            <person name="Zhong W."/>
            <person name="Zhou X."/>
            <person name="Zhu S.C."/>
            <person name="Zhu X."/>
            <person name="Smith H.O."/>
            <person name="Gibbs R.A."/>
            <person name="Myers E.W."/>
            <person name="Rubin G.M."/>
            <person name="Venter J.C."/>
        </authorList>
    </citation>
    <scope>NUCLEOTIDE SEQUENCE [LARGE SCALE GENOMIC DNA]</scope>
    <source>
        <strain>Berkeley</strain>
    </source>
</reference>
<reference key="2">
    <citation type="journal article" date="2002" name="Genome Biol.">
        <title>Annotation of the Drosophila melanogaster euchromatic genome: a systematic review.</title>
        <authorList>
            <person name="Misra S."/>
            <person name="Crosby M.A."/>
            <person name="Mungall C.J."/>
            <person name="Matthews B.B."/>
            <person name="Campbell K.S."/>
            <person name="Hradecky P."/>
            <person name="Huang Y."/>
            <person name="Kaminker J.S."/>
            <person name="Millburn G.H."/>
            <person name="Prochnik S.E."/>
            <person name="Smith C.D."/>
            <person name="Tupy J.L."/>
            <person name="Whitfield E.J."/>
            <person name="Bayraktaroglu L."/>
            <person name="Berman B.P."/>
            <person name="Bettencourt B.R."/>
            <person name="Celniker S.E."/>
            <person name="de Grey A.D.N.J."/>
            <person name="Drysdale R.A."/>
            <person name="Harris N.L."/>
            <person name="Richter J."/>
            <person name="Russo S."/>
            <person name="Schroeder A.J."/>
            <person name="Shu S.Q."/>
            <person name="Stapleton M."/>
            <person name="Yamada C."/>
            <person name="Ashburner M."/>
            <person name="Gelbart W.M."/>
            <person name="Rubin G.M."/>
            <person name="Lewis S.E."/>
        </authorList>
    </citation>
    <scope>GENOME REANNOTATION</scope>
    <source>
        <strain>Berkeley</strain>
    </source>
</reference>
<reference key="3">
    <citation type="journal article" date="2002" name="Genome Biol.">
        <title>A Drosophila full-length cDNA resource.</title>
        <authorList>
            <person name="Stapleton M."/>
            <person name="Carlson J.W."/>
            <person name="Brokstein P."/>
            <person name="Yu C."/>
            <person name="Champe M."/>
            <person name="George R.A."/>
            <person name="Guarin H."/>
            <person name="Kronmiller B."/>
            <person name="Pacleb J.M."/>
            <person name="Park S."/>
            <person name="Wan K.H."/>
            <person name="Rubin G.M."/>
            <person name="Celniker S.E."/>
        </authorList>
    </citation>
    <scope>NUCLEOTIDE SEQUENCE [LARGE SCALE MRNA]</scope>
    <source>
        <strain>Berkeley</strain>
        <tissue>Head</tissue>
    </source>
</reference>
<evidence type="ECO:0000250" key="1">
    <source>
        <dbReference type="UniProtKB" id="P32368"/>
    </source>
</evidence>
<evidence type="ECO:0000255" key="2"/>
<evidence type="ECO:0000255" key="3">
    <source>
        <dbReference type="PROSITE-ProRule" id="PRU00183"/>
    </source>
</evidence>
<gene>
    <name type="primary">Sac1</name>
    <name type="synonym">Sacm1l</name>
    <name type="ORF">CG9128</name>
</gene>
<feature type="chain" id="PRO_0000317178" description="Phosphatidylinositol-3-phosphatase SAC1">
    <location>
        <begin position="1"/>
        <end position="592"/>
    </location>
</feature>
<feature type="topological domain" description="Cytoplasmic" evidence="1">
    <location>
        <begin position="1"/>
        <end position="523"/>
    </location>
</feature>
<feature type="transmembrane region" description="Helical" evidence="2">
    <location>
        <begin position="524"/>
        <end position="544"/>
    </location>
</feature>
<feature type="topological domain" description="Lumenal" evidence="1">
    <location>
        <begin position="545"/>
        <end position="552"/>
    </location>
</feature>
<feature type="transmembrane region" description="Helical" evidence="2">
    <location>
        <begin position="553"/>
        <end position="573"/>
    </location>
</feature>
<feature type="topological domain" description="Cytoplasmic" evidence="1">
    <location>
        <begin position="574"/>
        <end position="592"/>
    </location>
</feature>
<feature type="domain" description="SAC" evidence="3">
    <location>
        <begin position="121"/>
        <end position="451"/>
    </location>
</feature>
<sequence>MDSREENAVYDDMNLYIAPQSFIIEPNGGDELLVIGRHDKVTRVQPASGGLVANLRPTRRICGVLGTIHLLSCDYLLVATHRLFVGVLNGAVVWRLAGYDIIPYIPNSFQRKENENYLRLLRQTLDTKFFYFSYRYDLTNSLQRQREVAQSRPEVSGLLQRAEQRFVWNGYVLRQFNCDKMEKFQLPLVLGFVSINQVQINGQTFFWSIITRRSVQRAGTRLFCRGSDEQGHVANFVETEQIVEFNGQLTGFVQTRGSMPFHWHQLPNLRYKPRPVLVPGKDHLAACGLHFKEQIRLYGNNVAVNLVDHKGAEGELEATYARLVREMGNPQVRYESFDFHSECRKMRWDRLNILIDRLAHEQDQFGVYHVFDDGKLVSTQTGVFRTNCIDCLDRTNVVQSMLARRSLTAVLQKLGVLHVGQKVEHASDIFESIFKGVWADNADLVSLQYSGTCALKTDFTRTGKRTKSGAMQDGKNSLMRYYLNNFADGQRQDSIDLFLGKYLVNDNEGGAVPSPLESKHGWRFFTFPSVLLVAVAMFMITMTYPAEFNTENLLFMLFWGAMIAVSATGILHYGVEFVQWPRLFPPISFRDP</sequence>